<gene>
    <name evidence="4" type="primary">idrA</name>
    <name evidence="7" type="ORF">PSCT_04485</name>
</gene>
<keyword id="KW-0003">3Fe-4S</keyword>
<keyword id="KW-0408">Iron</keyword>
<keyword id="KW-0411">Iron-sulfur</keyword>
<keyword id="KW-0479">Metal-binding</keyword>
<keyword id="KW-0500">Molybdenum</keyword>
<keyword id="KW-0560">Oxidoreductase</keyword>
<keyword id="KW-0574">Periplasm</keyword>
<evidence type="ECO:0000250" key="1">
    <source>
        <dbReference type="UniProtKB" id="Q7SIF4"/>
    </source>
</evidence>
<evidence type="ECO:0000256" key="2">
    <source>
        <dbReference type="SAM" id="MobiDB-lite"/>
    </source>
</evidence>
<evidence type="ECO:0000269" key="3">
    <source>
    </source>
</evidence>
<evidence type="ECO:0000303" key="4">
    <source>
    </source>
</evidence>
<evidence type="ECO:0000305" key="5"/>
<evidence type="ECO:0000305" key="6">
    <source>
    </source>
</evidence>
<evidence type="ECO:0000312" key="7">
    <source>
        <dbReference type="EMBL" id="GCA58265.1"/>
    </source>
</evidence>
<proteinExistence type="evidence at protein level"/>
<feature type="chain" id="PRO_0000455405" description="Iodate reductase subunit IdrA">
    <location>
        <begin position="1"/>
        <end position="892"/>
    </location>
</feature>
<feature type="region of interest" description="Disordered" evidence="2">
    <location>
        <begin position="431"/>
        <end position="452"/>
    </location>
</feature>
<feature type="compositionally biased region" description="Gly residues" evidence="2">
    <location>
        <begin position="431"/>
        <end position="442"/>
    </location>
</feature>
<feature type="binding site" evidence="1">
    <location>
        <position position="27"/>
    </location>
    <ligand>
        <name>[3Fe-4S] cluster</name>
        <dbReference type="ChEBI" id="CHEBI:21137"/>
    </ligand>
</feature>
<feature type="binding site" evidence="1">
    <location>
        <position position="30"/>
    </location>
    <ligand>
        <name>[3Fe-4S] cluster</name>
        <dbReference type="ChEBI" id="CHEBI:21137"/>
    </ligand>
</feature>
<feature type="binding site" evidence="1">
    <location>
        <position position="34"/>
    </location>
    <ligand>
        <name>[3Fe-4S] cluster</name>
        <dbReference type="ChEBI" id="CHEBI:21137"/>
    </ligand>
</feature>
<feature type="site" description="Involved in charge transfer" evidence="1">
    <location>
        <position position="105"/>
    </location>
</feature>
<sequence length="892" mass="99303">MSKPDEYLSSNSVPLPPQDADVLTTACDYCIVACGYKVYRWPVGKEGGAKASENALGADFPHQMMMGAWASPAQHNVVSYRDQPHHVVVIADKDATVVNPGGNHSIRGGTLAEKCYNPSNRTRERLQHPMIRVNGKLTPVSWDLATEVMADISQYIIAKYGEHAWAVKSHSYQYFENVYAITKLAMTSIGTPAFAWHDKCSATNDATGLDDAGIDSFASSYEDWADCEVAFLSGVDPYETKTTLFTSHMMPGDKKFVFVTPHMTMGVAWSVKAGRGLWLPIIPGTDTVLHMALARIIIENDWQDQPFIDKWIANSWEVDSGYGRGTRNTGWQWRTTWGTWQSDWQDYRKFILAQEESKLDVAAQITGLSADDIRTAAEWIAKPKADGSHPKTSFMCEKGNYWSNNYMNSASFASLGLICGSGNRKGRMISRGGGHQRGGLSAGGNSEWLSPEKYPGRRKKSFNLDLWLMEGNIRFAWVIGTTWVAAMMGSNALEAKMRSLTAESPHQIKSLDRAAIFETLKARVDSGGMVMANSDLYPVVPVGTDFADIVYPVASWGEDNFTRCNSERRLRLYSKFYDAPGEAKPDWWIVQKFAQKMGLDKDGGYSWKDSNDVFEEVARFSRDGVLNYHPLAEKAKASGIKAQELLRGYGTTGIQTPIRERGGELVGTVRLHDPDNDWGEIEGSTVHTKALVAFNTHSGKAILLKSPWQYAGWIQFYEAIKPRAAKGEVWVTNGRVNETWQSGFDDRRKPYLSQRWPEGFIFINPEDARKKGIESGDYVEVVNDTVYIQTGQPQGVLDADLTFNQLMADGHIKITTGRFKTIAVVSDEMRPGVCQANFNVPSSPANAVVSAVPDPMTNNYRYKLGRGVLNKVGESPYKHNFTQMSLKPRNIV</sequence>
<protein>
    <recommendedName>
        <fullName evidence="5">Iodate reductase subunit IdrA</fullName>
        <ecNumber evidence="6">1.-.-.-</ecNumber>
    </recommendedName>
</protein>
<reference key="1">
    <citation type="submission" date="2016-11" db="EMBL/GenBank/DDBJ databases">
        <title>Genome sequencing of bacteria contributing to the geochemical cycling of arsenic, bromine, and iodine.</title>
        <authorList>
            <person name="Harada M."/>
            <person name="Ito K."/>
            <person name="Nakajima N."/>
            <person name="Yamamura S."/>
            <person name="Tomita M."/>
            <person name="Suzuki H."/>
            <person name="Amachi S."/>
        </authorList>
    </citation>
    <scope>NUCLEOTIDE SEQUENCE [LARGE SCALE GENOMIC DNA]</scope>
    <source>
        <strain>SCT</strain>
    </source>
</reference>
<reference key="2">
    <citation type="journal article" date="2020" name="Environ. Microbiol.">
        <title>A novel dimethylsulfoxide reductase family of molybdenum enzyme, Idr, is involved in iodate respiration by Pseudomonas sp. SCT.</title>
        <authorList>
            <person name="Yamazaki C."/>
            <person name="Kashiwa S."/>
            <person name="Horiuchi A."/>
            <person name="Kasahara Y."/>
            <person name="Yamamura S."/>
            <person name="Amachi S."/>
        </authorList>
    </citation>
    <scope>IDENTIFICATION BY MASS SPECTROMETRY</scope>
    <scope>FUNCTION</scope>
    <scope>SUBUNIT</scope>
    <scope>SUBCELLULAR LOCATION</scope>
    <scope>INDUCTION</scope>
    <source>
        <strain>SCT</strain>
    </source>
</reference>
<accession>A0A391NTR7</accession>
<name>IDRA_PSEXS</name>
<dbReference type="EC" id="1.-.-.-" evidence="6"/>
<dbReference type="EMBL" id="BDJA01000015">
    <property type="protein sequence ID" value="GCA58265.1"/>
    <property type="molecule type" value="Genomic_DNA"/>
</dbReference>
<dbReference type="RefSeq" id="WP_125025141.1">
    <property type="nucleotide sequence ID" value="NZ_BDJA01000015.1"/>
</dbReference>
<dbReference type="SMR" id="A0A391NTR7"/>
<dbReference type="OrthoDB" id="9810782at2"/>
<dbReference type="Proteomes" id="UP000268673">
    <property type="component" value="Unassembled WGS sequence"/>
</dbReference>
<dbReference type="GO" id="GO:0016020">
    <property type="term" value="C:membrane"/>
    <property type="evidence" value="ECO:0007669"/>
    <property type="project" value="TreeGrafter"/>
</dbReference>
<dbReference type="GO" id="GO:1990204">
    <property type="term" value="C:oxidoreductase complex"/>
    <property type="evidence" value="ECO:0007669"/>
    <property type="project" value="UniProtKB-ARBA"/>
</dbReference>
<dbReference type="GO" id="GO:0042597">
    <property type="term" value="C:periplasmic space"/>
    <property type="evidence" value="ECO:0007669"/>
    <property type="project" value="UniProtKB-SubCell"/>
</dbReference>
<dbReference type="GO" id="GO:0051538">
    <property type="term" value="F:3 iron, 4 sulfur cluster binding"/>
    <property type="evidence" value="ECO:0007669"/>
    <property type="project" value="UniProtKB-KW"/>
</dbReference>
<dbReference type="GO" id="GO:0046872">
    <property type="term" value="F:metal ion binding"/>
    <property type="evidence" value="ECO:0007669"/>
    <property type="project" value="UniProtKB-KW"/>
</dbReference>
<dbReference type="GO" id="GO:0043546">
    <property type="term" value="F:molybdopterin cofactor binding"/>
    <property type="evidence" value="ECO:0007669"/>
    <property type="project" value="InterPro"/>
</dbReference>
<dbReference type="GO" id="GO:0003954">
    <property type="term" value="F:NADH dehydrogenase activity"/>
    <property type="evidence" value="ECO:0007669"/>
    <property type="project" value="TreeGrafter"/>
</dbReference>
<dbReference type="GO" id="GO:0022904">
    <property type="term" value="P:respiratory electron transport chain"/>
    <property type="evidence" value="ECO:0007669"/>
    <property type="project" value="TreeGrafter"/>
</dbReference>
<dbReference type="Gene3D" id="2.40.40.20">
    <property type="match status" value="1"/>
</dbReference>
<dbReference type="Gene3D" id="3.30.200.200">
    <property type="match status" value="1"/>
</dbReference>
<dbReference type="Gene3D" id="3.40.50.740">
    <property type="match status" value="1"/>
</dbReference>
<dbReference type="Gene3D" id="3.40.228.10">
    <property type="entry name" value="Dimethylsulfoxide Reductase, domain 2"/>
    <property type="match status" value="1"/>
</dbReference>
<dbReference type="InterPro" id="IPR041632">
    <property type="entry name" value="AioA/IdrA_3Fe-4S"/>
</dbReference>
<dbReference type="InterPro" id="IPR014066">
    <property type="entry name" value="AioA/IdrA_lsu"/>
</dbReference>
<dbReference type="InterPro" id="IPR009010">
    <property type="entry name" value="Asp_de-COase-like_dom_sf"/>
</dbReference>
<dbReference type="InterPro" id="IPR006657">
    <property type="entry name" value="MoPterin_dinucl-bd_dom"/>
</dbReference>
<dbReference type="InterPro" id="IPR006656">
    <property type="entry name" value="Mopterin_OxRdtase"/>
</dbReference>
<dbReference type="InterPro" id="IPR050123">
    <property type="entry name" value="Prok_molybdopt-oxidoreductase"/>
</dbReference>
<dbReference type="NCBIfam" id="TIGR02693">
    <property type="entry name" value="arsenite_ox_L"/>
    <property type="match status" value="1"/>
</dbReference>
<dbReference type="PANTHER" id="PTHR43105:SF10">
    <property type="entry name" value="NADH-QUINONE OXIDOREDUCTASE SUBUNIT G"/>
    <property type="match status" value="1"/>
</dbReference>
<dbReference type="PANTHER" id="PTHR43105">
    <property type="entry name" value="RESPIRATORY NITRATE REDUCTASE"/>
    <property type="match status" value="1"/>
</dbReference>
<dbReference type="Pfam" id="PF00384">
    <property type="entry name" value="Molybdopterin"/>
    <property type="match status" value="1"/>
</dbReference>
<dbReference type="Pfam" id="PF01568">
    <property type="entry name" value="Molydop_binding"/>
    <property type="match status" value="1"/>
</dbReference>
<dbReference type="Pfam" id="PF18465">
    <property type="entry name" value="Rieske_3"/>
    <property type="match status" value="1"/>
</dbReference>
<dbReference type="SUPFAM" id="SSF50692">
    <property type="entry name" value="ADC-like"/>
    <property type="match status" value="1"/>
</dbReference>
<dbReference type="SUPFAM" id="SSF53706">
    <property type="entry name" value="Formate dehydrogenase/DMSO reductase, domains 1-3"/>
    <property type="match status" value="1"/>
</dbReference>
<comment type="function">
    <text evidence="3">Involved in iodate respiration (PubMed:32190953). Probably catalyzes the reduction of iodate (IO(3)(-)) to hypoiodous acid (HIO) and H(2)O(2), using a reduced cytochrome c as the electron donor (PubMed:32190953).</text>
</comment>
<comment type="cofactor">
    <cofactor evidence="1">
        <name>[3Fe-4S] cluster</name>
        <dbReference type="ChEBI" id="CHEBI:21137"/>
    </cofactor>
    <text evidence="1">Binds 1 [3Fe-4S] cluster per subunit.</text>
</comment>
<comment type="cofactor">
    <cofactor evidence="1">
        <name>Mo-bis(molybdopterin guanine dinucleotide)</name>
        <dbReference type="ChEBI" id="CHEBI:60539"/>
    </cofactor>
    <text evidence="1">Binds 1 molybdenum-bis(molybdopterin guanine dinucleotide) (Mo-bis-MGD) cofactor per subunit.</text>
</comment>
<comment type="subunit">
    <text evidence="3">The iodate reductase (Idr) complex is composed of a molybdopterin-dependent iodate reductase (IdrA and IdrB subunits) and two associated peroxidases (IdrP1 and IdrP2).</text>
</comment>
<comment type="subcellular location">
    <subcellularLocation>
        <location evidence="3">Periplasm</location>
    </subcellularLocation>
</comment>
<comment type="induction">
    <text evidence="3">Abundantly expressed under iodate-respiring conditions.</text>
</comment>
<comment type="similarity">
    <text evidence="5">Belongs to the prokaryotic molybdopterin-containing oxidoreductase family.</text>
</comment>
<organism>
    <name type="scientific">Pseudomonas sp. (strain SCT)</name>
    <dbReference type="NCBI Taxonomy" id="412955"/>
    <lineage>
        <taxon>Bacteria</taxon>
        <taxon>Pseudomonadati</taxon>
        <taxon>Pseudomonadota</taxon>
        <taxon>Gammaproteobacteria</taxon>
        <taxon>Pseudomonadales</taxon>
        <taxon>Pseudomonadaceae</taxon>
        <taxon>Pseudomonas</taxon>
    </lineage>
</organism>